<comment type="function">
    <text evidence="1">Translocates 4-amino-4-deoxy-L-arabinose-phosphoundecaprenol (alpha-L-Ara4N-phosphoundecaprenol) from the cytoplasmic to the periplasmic side of the inner membrane.</text>
</comment>
<comment type="pathway">
    <text evidence="1">Bacterial outer membrane biogenesis; lipopolysaccharide biosynthesis.</text>
</comment>
<comment type="subunit">
    <text evidence="1">Heterodimer of ArnE and ArnF.</text>
</comment>
<comment type="subcellular location">
    <subcellularLocation>
        <location evidence="1">Cell inner membrane</location>
        <topology evidence="1">Multi-pass membrane protein</topology>
    </subcellularLocation>
</comment>
<comment type="similarity">
    <text evidence="1">Belongs to the ArnF family.</text>
</comment>
<comment type="sequence caution" evidence="2">
    <conflict type="erroneous initiation">
        <sequence resource="EMBL-CDS" id="CAR08907"/>
    </conflict>
</comment>
<reference key="1">
    <citation type="journal article" date="2009" name="PLoS Genet.">
        <title>Organised genome dynamics in the Escherichia coli species results in highly diverse adaptive paths.</title>
        <authorList>
            <person name="Touchon M."/>
            <person name="Hoede C."/>
            <person name="Tenaillon O."/>
            <person name="Barbe V."/>
            <person name="Baeriswyl S."/>
            <person name="Bidet P."/>
            <person name="Bingen E."/>
            <person name="Bonacorsi S."/>
            <person name="Bouchier C."/>
            <person name="Bouvet O."/>
            <person name="Calteau A."/>
            <person name="Chiapello H."/>
            <person name="Clermont O."/>
            <person name="Cruveiller S."/>
            <person name="Danchin A."/>
            <person name="Diard M."/>
            <person name="Dossat C."/>
            <person name="Karoui M.E."/>
            <person name="Frapy E."/>
            <person name="Garry L."/>
            <person name="Ghigo J.M."/>
            <person name="Gilles A.M."/>
            <person name="Johnson J."/>
            <person name="Le Bouguenec C."/>
            <person name="Lescat M."/>
            <person name="Mangenot S."/>
            <person name="Martinez-Jehanne V."/>
            <person name="Matic I."/>
            <person name="Nassif X."/>
            <person name="Oztas S."/>
            <person name="Petit M.A."/>
            <person name="Pichon C."/>
            <person name="Rouy Z."/>
            <person name="Ruf C.S."/>
            <person name="Schneider D."/>
            <person name="Tourret J."/>
            <person name="Vacherie B."/>
            <person name="Vallenet D."/>
            <person name="Medigue C."/>
            <person name="Rocha E.P.C."/>
            <person name="Denamur E."/>
        </authorList>
    </citation>
    <scope>NUCLEOTIDE SEQUENCE [LARGE SCALE GENOMIC DNA]</scope>
    <source>
        <strain>ED1a</strain>
    </source>
</reference>
<accession>B7MXU1</accession>
<feature type="chain" id="PRO_0000382004" description="Probable 4-amino-4-deoxy-L-arabinose-phosphoundecaprenol flippase subunit ArnF">
    <location>
        <begin position="1"/>
        <end position="128"/>
    </location>
</feature>
<feature type="topological domain" description="Cytoplasmic" evidence="1">
    <location>
        <begin position="1"/>
        <end position="2"/>
    </location>
</feature>
<feature type="transmembrane region" description="Helical" evidence="1">
    <location>
        <begin position="3"/>
        <end position="23"/>
    </location>
</feature>
<feature type="topological domain" description="Periplasmic" evidence="1">
    <location>
        <begin position="24"/>
        <end position="35"/>
    </location>
</feature>
<feature type="transmembrane region" description="Helical" evidence="1">
    <location>
        <begin position="36"/>
        <end position="56"/>
    </location>
</feature>
<feature type="topological domain" description="Cytoplasmic" evidence="1">
    <location>
        <begin position="57"/>
        <end position="76"/>
    </location>
</feature>
<feature type="transmembrane region" description="Helical" evidence="1">
    <location>
        <begin position="77"/>
        <end position="97"/>
    </location>
</feature>
<feature type="topological domain" description="Periplasmic" evidence="1">
    <location>
        <begin position="98"/>
        <end position="100"/>
    </location>
</feature>
<feature type="transmembrane region" description="Helical" evidence="1">
    <location>
        <begin position="101"/>
        <end position="121"/>
    </location>
</feature>
<feature type="topological domain" description="Cytoplasmic" evidence="1">
    <location>
        <begin position="122"/>
        <end position="128"/>
    </location>
</feature>
<proteinExistence type="inferred from homology"/>
<organism>
    <name type="scientific">Escherichia coli O81 (strain ED1a)</name>
    <dbReference type="NCBI Taxonomy" id="585397"/>
    <lineage>
        <taxon>Bacteria</taxon>
        <taxon>Pseudomonadati</taxon>
        <taxon>Pseudomonadota</taxon>
        <taxon>Gammaproteobacteria</taxon>
        <taxon>Enterobacterales</taxon>
        <taxon>Enterobacteriaceae</taxon>
        <taxon>Escherichia</taxon>
    </lineage>
</organism>
<gene>
    <name evidence="1" type="primary">arnF</name>
    <name type="ordered locus">ECED1_2726</name>
</gene>
<dbReference type="EMBL" id="CU928162">
    <property type="protein sequence ID" value="CAR08907.2"/>
    <property type="status" value="ALT_INIT"/>
    <property type="molecule type" value="Genomic_DNA"/>
</dbReference>
<dbReference type="RefSeq" id="WP_000523864.1">
    <property type="nucleotide sequence ID" value="NC_011745.1"/>
</dbReference>
<dbReference type="KEGG" id="ecq:ECED1_2726"/>
<dbReference type="HOGENOM" id="CLU_1243704_0_0_6"/>
<dbReference type="UniPathway" id="UPA00030"/>
<dbReference type="Proteomes" id="UP000000748">
    <property type="component" value="Chromosome"/>
</dbReference>
<dbReference type="GO" id="GO:0005886">
    <property type="term" value="C:plasma membrane"/>
    <property type="evidence" value="ECO:0007669"/>
    <property type="project" value="UniProtKB-SubCell"/>
</dbReference>
<dbReference type="GO" id="GO:1901505">
    <property type="term" value="F:carbohydrate derivative transmembrane transporter activity"/>
    <property type="evidence" value="ECO:0007669"/>
    <property type="project" value="InterPro"/>
</dbReference>
<dbReference type="GO" id="GO:0009245">
    <property type="term" value="P:lipid A biosynthetic process"/>
    <property type="evidence" value="ECO:0007669"/>
    <property type="project" value="UniProtKB-UniRule"/>
</dbReference>
<dbReference type="GO" id="GO:0009103">
    <property type="term" value="P:lipopolysaccharide biosynthetic process"/>
    <property type="evidence" value="ECO:0007669"/>
    <property type="project" value="UniProtKB-UniRule"/>
</dbReference>
<dbReference type="FunFam" id="1.10.3730.20:FF:000003">
    <property type="entry name" value="Probable 4-amino-4-deoxy-L-arabinose-phosphoundecaprenol flippase subunit ArnF"/>
    <property type="match status" value="1"/>
</dbReference>
<dbReference type="Gene3D" id="1.10.3730.20">
    <property type="match status" value="1"/>
</dbReference>
<dbReference type="HAMAP" id="MF_00538">
    <property type="entry name" value="Flippase_ArnF"/>
    <property type="match status" value="1"/>
</dbReference>
<dbReference type="InterPro" id="IPR022832">
    <property type="entry name" value="Flippase_ArnF"/>
</dbReference>
<dbReference type="InterPro" id="IPR000390">
    <property type="entry name" value="Small_drug/metabolite_transptr"/>
</dbReference>
<dbReference type="NCBIfam" id="NF002816">
    <property type="entry name" value="PRK02971.1-2"/>
    <property type="match status" value="1"/>
</dbReference>
<dbReference type="PANTHER" id="PTHR30561:SF9">
    <property type="entry name" value="4-AMINO-4-DEOXY-L-ARABINOSE-PHOSPHOUNDECAPRENOL FLIPPASE SUBUNIT ARNF-RELATED"/>
    <property type="match status" value="1"/>
</dbReference>
<dbReference type="PANTHER" id="PTHR30561">
    <property type="entry name" value="SMR FAMILY PROTON-DEPENDENT DRUG EFFLUX TRANSPORTER SUGE"/>
    <property type="match status" value="1"/>
</dbReference>
<dbReference type="SUPFAM" id="SSF103481">
    <property type="entry name" value="Multidrug resistance efflux transporter EmrE"/>
    <property type="match status" value="1"/>
</dbReference>
<protein>
    <recommendedName>
        <fullName evidence="1">Probable 4-amino-4-deoxy-L-arabinose-phosphoundecaprenol flippase subunit ArnF</fullName>
        <shortName evidence="1">L-Ara4N-phosphoundecaprenol flippase subunit ArnF</shortName>
    </recommendedName>
    <alternativeName>
        <fullName evidence="1">Undecaprenyl phosphate-aminoarabinose flippase subunit ArnF</fullName>
    </alternativeName>
</protein>
<evidence type="ECO:0000255" key="1">
    <source>
        <dbReference type="HAMAP-Rule" id="MF_00538"/>
    </source>
</evidence>
<evidence type="ECO:0000305" key="2"/>
<name>ARNF_ECO81</name>
<keyword id="KW-0997">Cell inner membrane</keyword>
<keyword id="KW-1003">Cell membrane</keyword>
<keyword id="KW-0441">Lipid A biosynthesis</keyword>
<keyword id="KW-0444">Lipid biosynthesis</keyword>
<keyword id="KW-0443">Lipid metabolism</keyword>
<keyword id="KW-0448">Lipopolysaccharide biosynthesis</keyword>
<keyword id="KW-0472">Membrane</keyword>
<keyword id="KW-0812">Transmembrane</keyword>
<keyword id="KW-1133">Transmembrane helix</keyword>
<keyword id="KW-0813">Transport</keyword>
<sequence length="128" mass="14057">MGLMWGLFSVIIASAAQLSLGFAASHLPPMTHLWDFIAALLAFGLDARILLLGLLGYLLSVFCWYKTLHKLALSKAYALLSMSYVLVWIASMVLPGWEGTFSLKALLGVACIMSGLMLIFLPTTKQRY</sequence>